<organism>
    <name type="scientific">Dictyostelium discoideum</name>
    <name type="common">Social amoeba</name>
    <dbReference type="NCBI Taxonomy" id="44689"/>
    <lineage>
        <taxon>Eukaryota</taxon>
        <taxon>Amoebozoa</taxon>
        <taxon>Evosea</taxon>
        <taxon>Eumycetozoa</taxon>
        <taxon>Dictyostelia</taxon>
        <taxon>Dictyosteliales</taxon>
        <taxon>Dictyosteliaceae</taxon>
        <taxon>Dictyostelium</taxon>
    </lineage>
</organism>
<protein>
    <recommendedName>
        <fullName>GATA zinc finger domain-containing protein 12</fullName>
    </recommendedName>
</protein>
<feature type="chain" id="PRO_0000330445" description="GATA zinc finger domain-containing protein 12">
    <location>
        <begin position="1"/>
        <end position="640"/>
    </location>
</feature>
<feature type="zinc finger region" description="GATA-type" evidence="1">
    <location>
        <begin position="506"/>
        <end position="531"/>
    </location>
</feature>
<feature type="region of interest" description="Disordered" evidence="2">
    <location>
        <begin position="121"/>
        <end position="209"/>
    </location>
</feature>
<feature type="region of interest" description="Disordered" evidence="2">
    <location>
        <begin position="355"/>
        <end position="390"/>
    </location>
</feature>
<feature type="compositionally biased region" description="Low complexity" evidence="2">
    <location>
        <begin position="122"/>
        <end position="209"/>
    </location>
</feature>
<feature type="compositionally biased region" description="Low complexity" evidence="2">
    <location>
        <begin position="355"/>
        <end position="379"/>
    </location>
</feature>
<feature type="compositionally biased region" description="Polar residues" evidence="2">
    <location>
        <begin position="380"/>
        <end position="390"/>
    </location>
</feature>
<dbReference type="EMBL" id="AAFI02000074">
    <property type="protein sequence ID" value="EAL64882.1"/>
    <property type="molecule type" value="Genomic_DNA"/>
</dbReference>
<dbReference type="RefSeq" id="XP_639891.1">
    <property type="nucleotide sequence ID" value="XM_634799.1"/>
</dbReference>
<dbReference type="SMR" id="Q54NM5"/>
<dbReference type="FunCoup" id="Q54NM5">
    <property type="interactions" value="877"/>
</dbReference>
<dbReference type="PaxDb" id="44689-DDB0220466"/>
<dbReference type="EnsemblProtists" id="EAL64882">
    <property type="protein sequence ID" value="EAL64882"/>
    <property type="gene ID" value="DDB_G0285139"/>
</dbReference>
<dbReference type="GeneID" id="8624962"/>
<dbReference type="KEGG" id="ddi:DDB_G0285139"/>
<dbReference type="dictyBase" id="DDB_G0285139">
    <property type="gene designation" value="gtaL"/>
</dbReference>
<dbReference type="VEuPathDB" id="AmoebaDB:DDB_G0285139"/>
<dbReference type="eggNOG" id="KOG1601">
    <property type="taxonomic scope" value="Eukaryota"/>
</dbReference>
<dbReference type="HOGENOM" id="CLU_427916_0_0_1"/>
<dbReference type="InParanoid" id="Q54NM5"/>
<dbReference type="OMA" id="NIPQHIN"/>
<dbReference type="PRO" id="PR:Q54NM5"/>
<dbReference type="Proteomes" id="UP000002195">
    <property type="component" value="Chromosome 4"/>
</dbReference>
<dbReference type="GO" id="GO:0043565">
    <property type="term" value="F:sequence-specific DNA binding"/>
    <property type="evidence" value="ECO:0007669"/>
    <property type="project" value="InterPro"/>
</dbReference>
<dbReference type="GO" id="GO:0008270">
    <property type="term" value="F:zinc ion binding"/>
    <property type="evidence" value="ECO:0007669"/>
    <property type="project" value="UniProtKB-KW"/>
</dbReference>
<dbReference type="GO" id="GO:0006355">
    <property type="term" value="P:regulation of DNA-templated transcription"/>
    <property type="evidence" value="ECO:0007669"/>
    <property type="project" value="InterPro"/>
</dbReference>
<dbReference type="CDD" id="cd00202">
    <property type="entry name" value="ZnF_GATA"/>
    <property type="match status" value="1"/>
</dbReference>
<dbReference type="Gene3D" id="3.30.50.10">
    <property type="entry name" value="Erythroid Transcription Factor GATA-1, subunit A"/>
    <property type="match status" value="1"/>
</dbReference>
<dbReference type="InterPro" id="IPR052138">
    <property type="entry name" value="GATA_ZnFinger_Domain"/>
</dbReference>
<dbReference type="InterPro" id="IPR000679">
    <property type="entry name" value="Znf_GATA"/>
</dbReference>
<dbReference type="InterPro" id="IPR013088">
    <property type="entry name" value="Znf_NHR/GATA"/>
</dbReference>
<dbReference type="PANTHER" id="PTHR47255">
    <property type="entry name" value="GATA TRANSCRIPTION FACTOR 22-RELATED"/>
    <property type="match status" value="1"/>
</dbReference>
<dbReference type="PANTHER" id="PTHR47255:SF4">
    <property type="entry name" value="GATA ZINC FINGER DOMAIN-CONTAINING PROTEIN 12"/>
    <property type="match status" value="1"/>
</dbReference>
<dbReference type="Pfam" id="PF00320">
    <property type="entry name" value="GATA"/>
    <property type="match status" value="1"/>
</dbReference>
<dbReference type="SMART" id="SM00401">
    <property type="entry name" value="ZnF_GATA"/>
    <property type="match status" value="1"/>
</dbReference>
<dbReference type="SUPFAM" id="SSF57716">
    <property type="entry name" value="Glucocorticoid receptor-like (DNA-binding domain)"/>
    <property type="match status" value="1"/>
</dbReference>
<dbReference type="PROSITE" id="PS00344">
    <property type="entry name" value="GATA_ZN_FINGER_1"/>
    <property type="match status" value="1"/>
</dbReference>
<dbReference type="PROSITE" id="PS50114">
    <property type="entry name" value="GATA_ZN_FINGER_2"/>
    <property type="match status" value="1"/>
</dbReference>
<accession>Q54NM5</accession>
<gene>
    <name type="primary">gtaL</name>
    <name type="ORF">DDB_G0285139</name>
</gene>
<proteinExistence type="predicted"/>
<name>GTAL_DICDI</name>
<sequence>MQDSYYLMSKNQFQDLYNDNSIYFNDESNIENIISCENVPFGSTIEASNNFDSNYNCNNINNGGINSFNNSSSIFKSMTPKKTPNGLKNLNNNIPTVNLAPISENVSTDTLNSQIVPSFQSNNIPQQIPSSNNNNNINNNNNTISSNNNNNTASIPITTTPTVVNNNNNNNNNNNNNNNNNNNNNNNNNNNNNNNNNNNNNNNNNNIPISNSCNFSNNLEKSTPIVNLIQYEQQPQQNNNIYQNNDTSNLNNNNIVCHTKDNENIETISSNNNNNYTYQDPNYQDPEKVQLTMNCFKLIQYCSQLTNLTKQAFSNPSAAACELETLSTMGNYIQYEISSLKSSLVKNLPNEAQQQQIRLQQQQSQQQHQQHQQHQQHQQPPTNIPQHINNCNIPRSPFDSCVPNSSYINSPLVANDFGYYSPNSMMNNNNDKINSEQGVFSSTISSPLPINSSYTSPYIKNQNSPQSKVVKKQLKNSKQSPTYINLTENMIRAQTKKQKKTISRVCVNCKTSDTPEWRRGPQGAKTLCNACGIRYRLQQQQVPQSNLNSPRESYAVIPTCDENIKQQTSQNSTTNINSSTTTTTATIQQQQQQNIPQQFPQPIQSPLKMLNIDQQILNSYENNFKNQFIEKDFLLMDSFE</sequence>
<evidence type="ECO:0000255" key="1">
    <source>
        <dbReference type="PROSITE-ProRule" id="PRU00094"/>
    </source>
</evidence>
<evidence type="ECO:0000256" key="2">
    <source>
        <dbReference type="SAM" id="MobiDB-lite"/>
    </source>
</evidence>
<keyword id="KW-0479">Metal-binding</keyword>
<keyword id="KW-1185">Reference proteome</keyword>
<keyword id="KW-0862">Zinc</keyword>
<keyword id="KW-0863">Zinc-finger</keyword>
<reference key="1">
    <citation type="journal article" date="2005" name="Nature">
        <title>The genome of the social amoeba Dictyostelium discoideum.</title>
        <authorList>
            <person name="Eichinger L."/>
            <person name="Pachebat J.A."/>
            <person name="Gloeckner G."/>
            <person name="Rajandream M.A."/>
            <person name="Sucgang R."/>
            <person name="Berriman M."/>
            <person name="Song J."/>
            <person name="Olsen R."/>
            <person name="Szafranski K."/>
            <person name="Xu Q."/>
            <person name="Tunggal B."/>
            <person name="Kummerfeld S."/>
            <person name="Madera M."/>
            <person name="Konfortov B.A."/>
            <person name="Rivero F."/>
            <person name="Bankier A.T."/>
            <person name="Lehmann R."/>
            <person name="Hamlin N."/>
            <person name="Davies R."/>
            <person name="Gaudet P."/>
            <person name="Fey P."/>
            <person name="Pilcher K."/>
            <person name="Chen G."/>
            <person name="Saunders D."/>
            <person name="Sodergren E.J."/>
            <person name="Davis P."/>
            <person name="Kerhornou A."/>
            <person name="Nie X."/>
            <person name="Hall N."/>
            <person name="Anjard C."/>
            <person name="Hemphill L."/>
            <person name="Bason N."/>
            <person name="Farbrother P."/>
            <person name="Desany B."/>
            <person name="Just E."/>
            <person name="Morio T."/>
            <person name="Rost R."/>
            <person name="Churcher C.M."/>
            <person name="Cooper J."/>
            <person name="Haydock S."/>
            <person name="van Driessche N."/>
            <person name="Cronin A."/>
            <person name="Goodhead I."/>
            <person name="Muzny D.M."/>
            <person name="Mourier T."/>
            <person name="Pain A."/>
            <person name="Lu M."/>
            <person name="Harper D."/>
            <person name="Lindsay R."/>
            <person name="Hauser H."/>
            <person name="James K.D."/>
            <person name="Quiles M."/>
            <person name="Madan Babu M."/>
            <person name="Saito T."/>
            <person name="Buchrieser C."/>
            <person name="Wardroper A."/>
            <person name="Felder M."/>
            <person name="Thangavelu M."/>
            <person name="Johnson D."/>
            <person name="Knights A."/>
            <person name="Loulseged H."/>
            <person name="Mungall K.L."/>
            <person name="Oliver K."/>
            <person name="Price C."/>
            <person name="Quail M.A."/>
            <person name="Urushihara H."/>
            <person name="Hernandez J."/>
            <person name="Rabbinowitsch E."/>
            <person name="Steffen D."/>
            <person name="Sanders M."/>
            <person name="Ma J."/>
            <person name="Kohara Y."/>
            <person name="Sharp S."/>
            <person name="Simmonds M.N."/>
            <person name="Spiegler S."/>
            <person name="Tivey A."/>
            <person name="Sugano S."/>
            <person name="White B."/>
            <person name="Walker D."/>
            <person name="Woodward J.R."/>
            <person name="Winckler T."/>
            <person name="Tanaka Y."/>
            <person name="Shaulsky G."/>
            <person name="Schleicher M."/>
            <person name="Weinstock G.M."/>
            <person name="Rosenthal A."/>
            <person name="Cox E.C."/>
            <person name="Chisholm R.L."/>
            <person name="Gibbs R.A."/>
            <person name="Loomis W.F."/>
            <person name="Platzer M."/>
            <person name="Kay R.R."/>
            <person name="Williams J.G."/>
            <person name="Dear P.H."/>
            <person name="Noegel A.A."/>
            <person name="Barrell B.G."/>
            <person name="Kuspa A."/>
        </authorList>
    </citation>
    <scope>NUCLEOTIDE SEQUENCE [LARGE SCALE GENOMIC DNA]</scope>
    <source>
        <strain>AX4</strain>
    </source>
</reference>